<feature type="chain" id="PRO_0000281110" description="EF-hand calcium-binding domain-containing protein 13">
    <location>
        <begin position="1"/>
        <end position="973"/>
    </location>
</feature>
<feature type="domain" description="EF-hand 1">
    <location>
        <begin position="488"/>
        <end position="523"/>
    </location>
</feature>
<feature type="domain" description="EF-hand 2">
    <location>
        <begin position="524"/>
        <end position="559"/>
    </location>
</feature>
<feature type="domain" description="EF-hand 3">
    <location>
        <begin position="633"/>
        <end position="668"/>
    </location>
</feature>
<feature type="domain" description="EF-hand 4">
    <location>
        <begin position="756"/>
        <end position="791"/>
    </location>
</feature>
<feature type="domain" description="EF-hand 5">
    <location>
        <begin position="792"/>
        <end position="827"/>
    </location>
</feature>
<feature type="domain" description="EF-hand 6">
    <location>
        <begin position="864"/>
        <end position="899"/>
    </location>
</feature>
<feature type="region of interest" description="Disordered" evidence="1">
    <location>
        <begin position="384"/>
        <end position="448"/>
    </location>
</feature>
<feature type="compositionally biased region" description="Basic and acidic residues" evidence="1">
    <location>
        <begin position="396"/>
        <end position="405"/>
    </location>
</feature>
<feature type="compositionally biased region" description="Low complexity" evidence="1">
    <location>
        <begin position="406"/>
        <end position="418"/>
    </location>
</feature>
<feature type="splice variant" id="VSP_047187" description="In isoform 2." evidence="4">
    <original>ALHKACKIFSKIRSGKIYVNDLPVILCILRISISDLEMRQALKTVDIDAFQDALKIFCRIKGGRVSTDDVFAVLDSMGIPINREILEEVTKHTYIDS</original>
    <variation>G</variation>
    <location>
        <begin position="173"/>
        <end position="269"/>
    </location>
</feature>
<feature type="splice variant" id="VSP_047188" description="In isoform 2." evidence="4">
    <original>E</original>
    <variation>G</variation>
    <location>
        <position position="880"/>
    </location>
</feature>
<feature type="splice variant" id="VSP_047189" description="In isoform 2." evidence="4">
    <location>
        <begin position="881"/>
        <end position="973"/>
    </location>
</feature>
<feature type="sequence variant" id="VAR_061091" description="In dbSNP:rs55853213.">
    <original>I</original>
    <variation>V</variation>
    <location>
        <position position="279"/>
    </location>
</feature>
<feature type="sequence variant" id="VAR_035465" description="In a breast cancer sample; somatic mutation." evidence="3">
    <original>Q</original>
    <variation>H</variation>
    <location>
        <position position="286"/>
    </location>
</feature>
<feature type="sequence variant" id="VAR_031228" description="In dbSNP:rs4968318." evidence="2">
    <original>V</original>
    <variation>I</variation>
    <location>
        <position position="312"/>
    </location>
</feature>
<feature type="sequence variant" id="VAR_031229" description="In dbSNP:rs17855599." evidence="2">
    <original>M</original>
    <variation>V</variation>
    <location>
        <position position="617"/>
    </location>
</feature>
<name>EFC13_HUMAN</name>
<organism>
    <name type="scientific">Homo sapiens</name>
    <name type="common">Human</name>
    <dbReference type="NCBI Taxonomy" id="9606"/>
    <lineage>
        <taxon>Eukaryota</taxon>
        <taxon>Metazoa</taxon>
        <taxon>Chordata</taxon>
        <taxon>Craniata</taxon>
        <taxon>Vertebrata</taxon>
        <taxon>Euteleostomi</taxon>
        <taxon>Mammalia</taxon>
        <taxon>Eutheria</taxon>
        <taxon>Euarchontoglires</taxon>
        <taxon>Primates</taxon>
        <taxon>Haplorrhini</taxon>
        <taxon>Catarrhini</taxon>
        <taxon>Hominidae</taxon>
        <taxon>Homo</taxon>
    </lineage>
</organism>
<accession>Q8IY85</accession>
<accession>G3V128</accession>
<accession>Q49AG9</accession>
<gene>
    <name type="primary">EFCAB13</name>
    <name type="synonym">C17orf57</name>
</gene>
<sequence>METKVHLFCQAEENIDLLDDGSNSFATDLSSGTINHKKYIKFSKTIEKEISPEIRSLSPEYKKIFETSIIFCGEEKSSDFSGEKKVGRKSLQVQQHSKRTEIIPPFLKLSKEKVTRKENSLCKLPNQYSVHKTSSPLCTSSAITREKEMLSNLYMTLYDEVTHGYLHSKELSALHKACKIFSKIRSGKIYVNDLPVILCILRISISDLEMRQALKTVDIDAFQDALKIFCRIKGGRVSTDDVFAVLDSMGIPINREILEEVTKHTYIDSNHMVDIGDIIFTLNELQEQYEDVSITEGSPLNEITSDRKLSSVAGCYLKYKKKNSLSSKLPEPSISKKLNKKSNQYYSKIMENDDLESKRPKNTWQIRKFLGGVGSSNVGVQEPYSKNGINFKKHSEKGEIHDSKSKPQSLKSSTSLSKSLDKSDISSIPKLQKPAVRKHSSLQKQVSSTEKTAISTLENFCEAISKLQENYIAAEELQSILPSTGINLLDEEFQKIVTDTSRNENGMVELDDFVNALAKERSFPECNALPGVIKAIDKIKDKNVDYEDLNTCLQNFGIYLSKPEFKKITELTEAGETKKVNFKEFIDTMMSNTECFSEKLVLPDAIETLDDLRKETMSVSDLWNTLSSLNSNLKKDEFLAALELVTVDEGDKVQFEEFAKVVRNMRDAARLEELQEVVLAADLLEGDMIAGKNLEDFLRNVGIKSPKEEVEKILQSDFVSEDNMVNIKDCMRALRDTQKFSNYIDFRKEASNLKLPKVNEIKEAANILSHVDNGKIGIPDLEHALKCLNVNLTEEDFNEALNCCNVSDNMEVDLKDFLMKMKESPHFQKSKATQILLATTQILQNDLVDVSDLKTLLMDKDLHTANAILTVMLRHVPEHESGKVSIQEFMTKLSDILTIPKAAGKFYLICTYCPDLERQAVVYMLKTIQDSIVKAQVSKKQYNMNIKQHKISLHNFCLNSKANIAKLNPNSKF</sequence>
<evidence type="ECO:0000256" key="1">
    <source>
        <dbReference type="SAM" id="MobiDB-lite"/>
    </source>
</evidence>
<evidence type="ECO:0000269" key="2">
    <source>
    </source>
</evidence>
<evidence type="ECO:0000269" key="3">
    <source>
    </source>
</evidence>
<evidence type="ECO:0000303" key="4">
    <source>
    </source>
</evidence>
<evidence type="ECO:0000305" key="5"/>
<protein>
    <recommendedName>
        <fullName>EF-hand calcium-binding domain-containing protein 13</fullName>
    </recommendedName>
</protein>
<reference key="1">
    <citation type="journal article" date="2006" name="Nature">
        <title>DNA sequence of human chromosome 17 and analysis of rearrangement in the human lineage.</title>
        <authorList>
            <person name="Zody M.C."/>
            <person name="Garber M."/>
            <person name="Adams D.J."/>
            <person name="Sharpe T."/>
            <person name="Harrow J."/>
            <person name="Lupski J.R."/>
            <person name="Nicholson C."/>
            <person name="Searle S.M."/>
            <person name="Wilming L."/>
            <person name="Young S.K."/>
            <person name="Abouelleil A."/>
            <person name="Allen N.R."/>
            <person name="Bi W."/>
            <person name="Bloom T."/>
            <person name="Borowsky M.L."/>
            <person name="Bugalter B.E."/>
            <person name="Butler J."/>
            <person name="Chang J.L."/>
            <person name="Chen C.-K."/>
            <person name="Cook A."/>
            <person name="Corum B."/>
            <person name="Cuomo C.A."/>
            <person name="de Jong P.J."/>
            <person name="DeCaprio D."/>
            <person name="Dewar K."/>
            <person name="FitzGerald M."/>
            <person name="Gilbert J."/>
            <person name="Gibson R."/>
            <person name="Gnerre S."/>
            <person name="Goldstein S."/>
            <person name="Grafham D.V."/>
            <person name="Grocock R."/>
            <person name="Hafez N."/>
            <person name="Hagopian D.S."/>
            <person name="Hart E."/>
            <person name="Norman C.H."/>
            <person name="Humphray S."/>
            <person name="Jaffe D.B."/>
            <person name="Jones M."/>
            <person name="Kamal M."/>
            <person name="Khodiyar V.K."/>
            <person name="LaButti K."/>
            <person name="Laird G."/>
            <person name="Lehoczky J."/>
            <person name="Liu X."/>
            <person name="Lokyitsang T."/>
            <person name="Loveland J."/>
            <person name="Lui A."/>
            <person name="Macdonald P."/>
            <person name="Major J.E."/>
            <person name="Matthews L."/>
            <person name="Mauceli E."/>
            <person name="McCarroll S.A."/>
            <person name="Mihalev A.H."/>
            <person name="Mudge J."/>
            <person name="Nguyen C."/>
            <person name="Nicol R."/>
            <person name="O'Leary S.B."/>
            <person name="Osoegawa K."/>
            <person name="Schwartz D.C."/>
            <person name="Shaw-Smith C."/>
            <person name="Stankiewicz P."/>
            <person name="Steward C."/>
            <person name="Swarbreck D."/>
            <person name="Venkataraman V."/>
            <person name="Whittaker C.A."/>
            <person name="Yang X."/>
            <person name="Zimmer A.R."/>
            <person name="Bradley A."/>
            <person name="Hubbard T."/>
            <person name="Birren B.W."/>
            <person name="Rogers J."/>
            <person name="Lander E.S."/>
            <person name="Nusbaum C."/>
        </authorList>
    </citation>
    <scope>NUCLEOTIDE SEQUENCE [LARGE SCALE GENOMIC DNA]</scope>
</reference>
<reference key="2">
    <citation type="submission" date="2005-09" db="EMBL/GenBank/DDBJ databases">
        <authorList>
            <person name="Mural R.J."/>
            <person name="Istrail S."/>
            <person name="Sutton G.G."/>
            <person name="Florea L."/>
            <person name="Halpern A.L."/>
            <person name="Mobarry C.M."/>
            <person name="Lippert R."/>
            <person name="Walenz B."/>
            <person name="Shatkay H."/>
            <person name="Dew I."/>
            <person name="Miller J.R."/>
            <person name="Flanigan M.J."/>
            <person name="Edwards N.J."/>
            <person name="Bolanos R."/>
            <person name="Fasulo D."/>
            <person name="Halldorsson B.V."/>
            <person name="Hannenhalli S."/>
            <person name="Turner R."/>
            <person name="Yooseph S."/>
            <person name="Lu F."/>
            <person name="Nusskern D.R."/>
            <person name="Shue B.C."/>
            <person name="Zheng X.H."/>
            <person name="Zhong F."/>
            <person name="Delcher A.L."/>
            <person name="Huson D.H."/>
            <person name="Kravitz S.A."/>
            <person name="Mouchard L."/>
            <person name="Reinert K."/>
            <person name="Remington K.A."/>
            <person name="Clark A.G."/>
            <person name="Waterman M.S."/>
            <person name="Eichler E.E."/>
            <person name="Adams M.D."/>
            <person name="Hunkapiller M.W."/>
            <person name="Myers E.W."/>
            <person name="Venter J.C."/>
        </authorList>
    </citation>
    <scope>NUCLEOTIDE SEQUENCE [LARGE SCALE GENOMIC DNA]</scope>
</reference>
<reference key="3">
    <citation type="journal article" date="2004" name="Genome Res.">
        <title>The status, quality, and expansion of the NIH full-length cDNA project: the Mammalian Gene Collection (MGC).</title>
        <authorList>
            <consortium name="The MGC Project Team"/>
        </authorList>
    </citation>
    <scope>NUCLEOTIDE SEQUENCE [LARGE SCALE MRNA] (ISOFORMS 1 AND 2)</scope>
    <scope>VARIANTS ILE-312 AND VAL-617</scope>
    <source>
        <tissue>Testis</tissue>
    </source>
</reference>
<reference key="4">
    <citation type="journal article" date="2006" name="Science">
        <title>The consensus coding sequences of human breast and colorectal cancers.</title>
        <authorList>
            <person name="Sjoeblom T."/>
            <person name="Jones S."/>
            <person name="Wood L.D."/>
            <person name="Parsons D.W."/>
            <person name="Lin J."/>
            <person name="Barber T.D."/>
            <person name="Mandelker D."/>
            <person name="Leary R.J."/>
            <person name="Ptak J."/>
            <person name="Silliman N."/>
            <person name="Szabo S."/>
            <person name="Buckhaults P."/>
            <person name="Farrell C."/>
            <person name="Meeh P."/>
            <person name="Markowitz S.D."/>
            <person name="Willis J."/>
            <person name="Dawson D."/>
            <person name="Willson J.K.V."/>
            <person name="Gazdar A.F."/>
            <person name="Hartigan J."/>
            <person name="Wu L."/>
            <person name="Liu C."/>
            <person name="Parmigiani G."/>
            <person name="Park B.H."/>
            <person name="Bachman K.E."/>
            <person name="Papadopoulos N."/>
            <person name="Vogelstein B."/>
            <person name="Kinzler K.W."/>
            <person name="Velculescu V.E."/>
        </authorList>
    </citation>
    <scope>VARIANT [LARGE SCALE ANALYSIS] HIS-286</scope>
</reference>
<dbReference type="EMBL" id="AC040934">
    <property type="status" value="NOT_ANNOTATED_CDS"/>
    <property type="molecule type" value="Genomic_DNA"/>
</dbReference>
<dbReference type="EMBL" id="AC068234">
    <property type="status" value="NOT_ANNOTATED_CDS"/>
    <property type="molecule type" value="Genomic_DNA"/>
</dbReference>
<dbReference type="EMBL" id="CH471231">
    <property type="protein sequence ID" value="EAW57672.1"/>
    <property type="molecule type" value="Genomic_DNA"/>
</dbReference>
<dbReference type="EMBL" id="BC036407">
    <property type="protein sequence ID" value="AAH36407.1"/>
    <property type="molecule type" value="mRNA"/>
</dbReference>
<dbReference type="EMBL" id="BC037876">
    <property type="protein sequence ID" value="AAH37876.1"/>
    <property type="status" value="ALT_FRAME"/>
    <property type="molecule type" value="mRNA"/>
</dbReference>
<dbReference type="CCDS" id="CCDS11512.1">
    <molecule id="Q8IY85-1"/>
</dbReference>
<dbReference type="CCDS" id="CCDS56034.1">
    <molecule id="Q8IY85-2"/>
</dbReference>
<dbReference type="RefSeq" id="NP_001182121.1">
    <molecule id="Q8IY85-2"/>
    <property type="nucleotide sequence ID" value="NM_001195192.2"/>
</dbReference>
<dbReference type="RefSeq" id="NP_689560.3">
    <molecule id="Q8IY85-1"/>
    <property type="nucleotide sequence ID" value="NM_152347.4"/>
</dbReference>
<dbReference type="BioGRID" id="125909">
    <property type="interactions" value="7"/>
</dbReference>
<dbReference type="FunCoup" id="Q8IY85">
    <property type="interactions" value="5"/>
</dbReference>
<dbReference type="IntAct" id="Q8IY85">
    <property type="interactions" value="4"/>
</dbReference>
<dbReference type="STRING" id="9606.ENSP00000332111"/>
<dbReference type="GlyGen" id="Q8IY85">
    <property type="glycosylation" value="1 site, 1 O-linked glycan (1 site)"/>
</dbReference>
<dbReference type="iPTMnet" id="Q8IY85"/>
<dbReference type="PhosphoSitePlus" id="Q8IY85"/>
<dbReference type="BioMuta" id="EFCAB13"/>
<dbReference type="DMDM" id="134034056"/>
<dbReference type="jPOST" id="Q8IY85"/>
<dbReference type="MassIVE" id="Q8IY85"/>
<dbReference type="PaxDb" id="9606-ENSP00000332111"/>
<dbReference type="PeptideAtlas" id="Q8IY85"/>
<dbReference type="Antibodypedia" id="17742">
    <property type="antibodies" value="89 antibodies from 18 providers"/>
</dbReference>
<dbReference type="DNASU" id="124989"/>
<dbReference type="Ensembl" id="ENST00000331493.7">
    <molecule id="Q8IY85-1"/>
    <property type="protein sequence ID" value="ENSP00000332111.2"/>
    <property type="gene ID" value="ENSG00000178852.16"/>
</dbReference>
<dbReference type="Ensembl" id="ENST00000517484.5">
    <molecule id="Q8IY85-2"/>
    <property type="protein sequence ID" value="ENSP00000430048.1"/>
    <property type="gene ID" value="ENSG00000178852.16"/>
</dbReference>
<dbReference type="GeneID" id="124989"/>
<dbReference type="KEGG" id="hsa:124989"/>
<dbReference type="MANE-Select" id="ENST00000331493.7">
    <property type="protein sequence ID" value="ENSP00000332111.2"/>
    <property type="RefSeq nucleotide sequence ID" value="NM_152347.5"/>
    <property type="RefSeq protein sequence ID" value="NP_689560.3"/>
</dbReference>
<dbReference type="UCSC" id="uc002ilm.4">
    <molecule id="Q8IY85-1"/>
    <property type="organism name" value="human"/>
</dbReference>
<dbReference type="AGR" id="HGNC:26864"/>
<dbReference type="CTD" id="124989"/>
<dbReference type="DisGeNET" id="124989"/>
<dbReference type="GeneCards" id="EFCAB13"/>
<dbReference type="HGNC" id="HGNC:26864">
    <property type="gene designation" value="EFCAB13"/>
</dbReference>
<dbReference type="HPA" id="ENSG00000178852">
    <property type="expression patterns" value="Tissue enhanced (testis)"/>
</dbReference>
<dbReference type="neXtProt" id="NX_Q8IY85"/>
<dbReference type="OpenTargets" id="ENSG00000178852"/>
<dbReference type="PharmGKB" id="PA142672240"/>
<dbReference type="VEuPathDB" id="HostDB:ENSG00000178852"/>
<dbReference type="eggNOG" id="KOG0027">
    <property type="taxonomic scope" value="Eukaryota"/>
</dbReference>
<dbReference type="GeneTree" id="ENSGT00390000004027"/>
<dbReference type="HOGENOM" id="CLU_009168_0_0_1"/>
<dbReference type="InParanoid" id="Q8IY85"/>
<dbReference type="OMA" id="HKACKIF"/>
<dbReference type="OrthoDB" id="429467at2759"/>
<dbReference type="PAN-GO" id="Q8IY85">
    <property type="GO annotations" value="0 GO annotations based on evolutionary models"/>
</dbReference>
<dbReference type="PhylomeDB" id="Q8IY85"/>
<dbReference type="TreeFam" id="TF337478"/>
<dbReference type="PathwayCommons" id="Q8IY85"/>
<dbReference type="BioGRID-ORCS" id="124989">
    <property type="hits" value="7 hits in 1143 CRISPR screens"/>
</dbReference>
<dbReference type="ChiTaRS" id="EFCAB13">
    <property type="organism name" value="human"/>
</dbReference>
<dbReference type="GenomeRNAi" id="124989"/>
<dbReference type="Pharos" id="Q8IY85">
    <property type="development level" value="Tdark"/>
</dbReference>
<dbReference type="PRO" id="PR:Q8IY85"/>
<dbReference type="Proteomes" id="UP000005640">
    <property type="component" value="Chromosome 17"/>
</dbReference>
<dbReference type="RNAct" id="Q8IY85">
    <property type="molecule type" value="protein"/>
</dbReference>
<dbReference type="Bgee" id="ENSG00000178852">
    <property type="expression patterns" value="Expressed in sperm and 103 other cell types or tissues"/>
</dbReference>
<dbReference type="ExpressionAtlas" id="Q8IY85">
    <property type="expression patterns" value="baseline and differential"/>
</dbReference>
<dbReference type="Gene3D" id="1.10.238.10">
    <property type="entry name" value="EF-hand"/>
    <property type="match status" value="3"/>
</dbReference>
<dbReference type="InterPro" id="IPR011992">
    <property type="entry name" value="EF-hand-dom_pair"/>
</dbReference>
<dbReference type="PANTHER" id="PTHR22656">
    <property type="entry name" value="EF-HAND CALCIUM-BINDING DOMAIN-CONTAINING PROTEIN 13"/>
    <property type="match status" value="1"/>
</dbReference>
<dbReference type="PANTHER" id="PTHR22656:SF1">
    <property type="entry name" value="EF-HAND CALCIUM-BINDING DOMAIN-CONTAINING PROTEIN 13"/>
    <property type="match status" value="1"/>
</dbReference>
<dbReference type="SUPFAM" id="SSF47473">
    <property type="entry name" value="EF-hand"/>
    <property type="match status" value="3"/>
</dbReference>
<proteinExistence type="evidence at protein level"/>
<comment type="alternative products">
    <event type="alternative splicing"/>
    <isoform>
        <id>Q8IY85-1</id>
        <name>1</name>
        <sequence type="displayed"/>
    </isoform>
    <isoform>
        <id>Q8IY85-2</id>
        <name>2</name>
        <sequence type="described" ref="VSP_047187 VSP_047188 VSP_047189"/>
    </isoform>
</comment>
<comment type="sequence caution" evidence="5">
    <conflict type="frameshift">
        <sequence resource="EMBL-CDS" id="AAH37876"/>
    </conflict>
</comment>
<keyword id="KW-0025">Alternative splicing</keyword>
<keyword id="KW-0106">Calcium</keyword>
<keyword id="KW-1267">Proteomics identification</keyword>
<keyword id="KW-1185">Reference proteome</keyword>
<keyword id="KW-0677">Repeat</keyword>